<feature type="initiator methionine" description="Removed" evidence="1">
    <location>
        <position position="1"/>
    </location>
</feature>
<feature type="chain" id="PRO_0000098084" description="Sec-independent protein translocase protein TatC">
    <location>
        <begin position="2"/>
        <end position="258"/>
    </location>
</feature>
<feature type="topological domain" description="Cytoplasmic" evidence="2">
    <location>
        <begin position="2"/>
        <end position="23"/>
    </location>
</feature>
<feature type="transmembrane region" description="Helical" evidence="3">
    <location>
        <begin position="24"/>
        <end position="44"/>
    </location>
</feature>
<feature type="topological domain" description="Periplasmic" evidence="2">
    <location>
        <begin position="45"/>
        <end position="75"/>
    </location>
</feature>
<feature type="transmembrane region" description="Helical" evidence="3">
    <location>
        <begin position="76"/>
        <end position="96"/>
    </location>
</feature>
<feature type="topological domain" description="Cytoplasmic" evidence="2">
    <location>
        <begin position="97"/>
        <end position="115"/>
    </location>
</feature>
<feature type="transmembrane region" description="Helical" evidence="3">
    <location>
        <begin position="116"/>
        <end position="136"/>
    </location>
</feature>
<feature type="topological domain" description="Periplasmic" evidence="2">
    <location>
        <begin position="137"/>
        <end position="156"/>
    </location>
</feature>
<feature type="transmembrane region" description="Helical" evidence="3">
    <location>
        <begin position="157"/>
        <end position="177"/>
    </location>
</feature>
<feature type="topological domain" description="Cytoplasmic" evidence="2">
    <location>
        <begin position="178"/>
        <end position="192"/>
    </location>
</feature>
<feature type="transmembrane region" description="Helical" evidence="3">
    <location>
        <begin position="193"/>
        <end position="210"/>
    </location>
</feature>
<feature type="topological domain" description="Periplasmic" evidence="2">
    <location>
        <position position="211"/>
    </location>
</feature>
<feature type="transmembrane region" description="Helical" evidence="3">
    <location>
        <begin position="212"/>
        <end position="232"/>
    </location>
</feature>
<feature type="topological domain" description="Cytoplasmic" evidence="2">
    <location>
        <begin position="233"/>
        <end position="258"/>
    </location>
</feature>
<keyword id="KW-0997">Cell inner membrane</keyword>
<keyword id="KW-1003">Cell membrane</keyword>
<keyword id="KW-0472">Membrane</keyword>
<keyword id="KW-0653">Protein transport</keyword>
<keyword id="KW-1185">Reference proteome</keyword>
<keyword id="KW-0811">Translocation</keyword>
<keyword id="KW-0812">Transmembrane</keyword>
<keyword id="KW-1133">Transmembrane helix</keyword>
<keyword id="KW-0813">Transport</keyword>
<sequence length="258" mass="28892">MSVEDTQPLITHLIELRKRLLNCIISVIVIFLCLVYFANDIYHLVSAPLIKQLPQGSTMIATDVASPFFTPIKLTFMVSLILSAPVILYQVWAFIAPALYKHERRLVVPLLVSSSLLFYIGMAFAYFVVFPLAFGFLANTAPEGVQVSTDIASYLSFVMALFMAFGVSFEVPVAIVLLCWMGITSPEDLRKKRPYVLVGAFVVGMLLTPPDVFSQTLLAIPMYCLFEIGVFFSRFYVGKGRNREEENDAEAESEKTEE</sequence>
<comment type="function">
    <text evidence="3">Part of the twin-arginine translocation (Tat) system that transports large folded proteins containing a characteristic twin-arginine motif in their signal peptide across membranes. Together with TatB, TatC is part of a receptor directly interacting with Tat signal peptides.</text>
</comment>
<comment type="subunit">
    <text evidence="3">The Tat system comprises two distinct complexes: a TatABC complex, containing multiple copies of TatA, TatB and TatC subunits, and a separate TatA complex, containing only TatA subunits. Substrates initially bind to the TatABC complex, which probably triggers association of the separate TatA complex to form the active translocon.</text>
</comment>
<comment type="subcellular location">
    <subcellularLocation>
        <location evidence="3">Cell inner membrane</location>
        <topology evidence="3">Multi-pass membrane protein</topology>
    </subcellularLocation>
</comment>
<comment type="similarity">
    <text evidence="3">Belongs to the TatC family.</text>
</comment>
<reference key="1">
    <citation type="journal article" date="2002" name="Proc. Natl. Acad. Sci. U.S.A.">
        <title>Extensive mosaic structure revealed by the complete genome sequence of uropathogenic Escherichia coli.</title>
        <authorList>
            <person name="Welch R.A."/>
            <person name="Burland V."/>
            <person name="Plunkett G. III"/>
            <person name="Redford P."/>
            <person name="Roesch P."/>
            <person name="Rasko D."/>
            <person name="Buckles E.L."/>
            <person name="Liou S.-R."/>
            <person name="Boutin A."/>
            <person name="Hackett J."/>
            <person name="Stroud D."/>
            <person name="Mayhew G.F."/>
            <person name="Rose D.J."/>
            <person name="Zhou S."/>
            <person name="Schwartz D.C."/>
            <person name="Perna N.T."/>
            <person name="Mobley H.L.T."/>
            <person name="Donnenberg M.S."/>
            <person name="Blattner F.R."/>
        </authorList>
    </citation>
    <scope>NUCLEOTIDE SEQUENCE [LARGE SCALE GENOMIC DNA]</scope>
    <source>
        <strain>CFT073 / ATCC 700928 / UPEC</strain>
    </source>
</reference>
<organism>
    <name type="scientific">Escherichia coli O6:H1 (strain CFT073 / ATCC 700928 / UPEC)</name>
    <dbReference type="NCBI Taxonomy" id="199310"/>
    <lineage>
        <taxon>Bacteria</taxon>
        <taxon>Pseudomonadati</taxon>
        <taxon>Pseudomonadota</taxon>
        <taxon>Gammaproteobacteria</taxon>
        <taxon>Enterobacterales</taxon>
        <taxon>Enterobacteriaceae</taxon>
        <taxon>Escherichia</taxon>
    </lineage>
</organism>
<gene>
    <name evidence="3" type="primary">tatC</name>
    <name type="synonym">mttB</name>
    <name type="ordered locus">c4787</name>
</gene>
<dbReference type="EMBL" id="AE014075">
    <property type="protein sequence ID" value="AAN83220.1"/>
    <property type="molecule type" value="Genomic_DNA"/>
</dbReference>
<dbReference type="RefSeq" id="WP_000109949.1">
    <property type="nucleotide sequence ID" value="NZ_CP051263.1"/>
</dbReference>
<dbReference type="SMR" id="Q8FBI6"/>
<dbReference type="STRING" id="199310.c4787"/>
<dbReference type="KEGG" id="ecc:c4787"/>
<dbReference type="eggNOG" id="COG0805">
    <property type="taxonomic scope" value="Bacteria"/>
</dbReference>
<dbReference type="HOGENOM" id="CLU_031942_1_1_6"/>
<dbReference type="BioCyc" id="ECOL199310:C4787-MONOMER"/>
<dbReference type="Proteomes" id="UP000001410">
    <property type="component" value="Chromosome"/>
</dbReference>
<dbReference type="GO" id="GO:0033281">
    <property type="term" value="C:TAT protein transport complex"/>
    <property type="evidence" value="ECO:0007669"/>
    <property type="project" value="UniProtKB-UniRule"/>
</dbReference>
<dbReference type="GO" id="GO:0009977">
    <property type="term" value="F:proton motive force dependent protein transmembrane transporter activity"/>
    <property type="evidence" value="ECO:0007669"/>
    <property type="project" value="TreeGrafter"/>
</dbReference>
<dbReference type="GO" id="GO:0065002">
    <property type="term" value="P:intracellular protein transmembrane transport"/>
    <property type="evidence" value="ECO:0007669"/>
    <property type="project" value="TreeGrafter"/>
</dbReference>
<dbReference type="GO" id="GO:0043953">
    <property type="term" value="P:protein transport by the Tat complex"/>
    <property type="evidence" value="ECO:0007669"/>
    <property type="project" value="UniProtKB-UniRule"/>
</dbReference>
<dbReference type="HAMAP" id="MF_00902">
    <property type="entry name" value="TatC"/>
    <property type="match status" value="1"/>
</dbReference>
<dbReference type="InterPro" id="IPR019820">
    <property type="entry name" value="Sec-indep_translocase_CS"/>
</dbReference>
<dbReference type="InterPro" id="IPR002033">
    <property type="entry name" value="TatC"/>
</dbReference>
<dbReference type="NCBIfam" id="NF008174">
    <property type="entry name" value="PRK10921.1"/>
    <property type="match status" value="1"/>
</dbReference>
<dbReference type="NCBIfam" id="TIGR00945">
    <property type="entry name" value="tatC"/>
    <property type="match status" value="1"/>
</dbReference>
<dbReference type="PANTHER" id="PTHR30371">
    <property type="entry name" value="SEC-INDEPENDENT PROTEIN TRANSLOCASE PROTEIN TATC"/>
    <property type="match status" value="1"/>
</dbReference>
<dbReference type="PANTHER" id="PTHR30371:SF0">
    <property type="entry name" value="SEC-INDEPENDENT PROTEIN TRANSLOCASE PROTEIN TATC, CHLOROPLASTIC-RELATED"/>
    <property type="match status" value="1"/>
</dbReference>
<dbReference type="Pfam" id="PF00902">
    <property type="entry name" value="TatC"/>
    <property type="match status" value="1"/>
</dbReference>
<dbReference type="PRINTS" id="PR01840">
    <property type="entry name" value="TATCFAMILY"/>
</dbReference>
<dbReference type="PROSITE" id="PS01218">
    <property type="entry name" value="TATC"/>
    <property type="match status" value="1"/>
</dbReference>
<evidence type="ECO:0000250" key="1"/>
<evidence type="ECO:0000255" key="2"/>
<evidence type="ECO:0000255" key="3">
    <source>
        <dbReference type="HAMAP-Rule" id="MF_00902"/>
    </source>
</evidence>
<name>TATC_ECOL6</name>
<protein>
    <recommendedName>
        <fullName evidence="3">Sec-independent protein translocase protein TatC</fullName>
    </recommendedName>
</protein>
<proteinExistence type="inferred from homology"/>
<accession>Q8FBI6</accession>